<accession>Q99PA3</accession>
<organism>
    <name type="scientific">Cricetulus griseus</name>
    <name type="common">Chinese hamster</name>
    <name type="synonym">Cricetulus barabensis griseus</name>
    <dbReference type="NCBI Taxonomy" id="10029"/>
    <lineage>
        <taxon>Eukaryota</taxon>
        <taxon>Metazoa</taxon>
        <taxon>Chordata</taxon>
        <taxon>Craniata</taxon>
        <taxon>Vertebrata</taxon>
        <taxon>Euteleostomi</taxon>
        <taxon>Mammalia</taxon>
        <taxon>Eutheria</taxon>
        <taxon>Euarchontoglires</taxon>
        <taxon>Glires</taxon>
        <taxon>Rodentia</taxon>
        <taxon>Myomorpha</taxon>
        <taxon>Muroidea</taxon>
        <taxon>Cricetidae</taxon>
        <taxon>Cricetinae</taxon>
        <taxon>Cricetulus</taxon>
    </lineage>
</organism>
<dbReference type="EMBL" id="AF320819">
    <property type="protein sequence ID" value="AAK09323.1"/>
    <property type="molecule type" value="mRNA"/>
</dbReference>
<dbReference type="SMR" id="Q99PA3"/>
<dbReference type="GlyCosmos" id="Q99PA3">
    <property type="glycosylation" value="3 sites, No reported glycans"/>
</dbReference>
<dbReference type="PaxDb" id="10029-XP_007615025.1"/>
<dbReference type="eggNOG" id="ENOG502QPKN">
    <property type="taxonomic scope" value="Eukaryota"/>
</dbReference>
<dbReference type="Proteomes" id="UP000694386">
    <property type="component" value="Unplaced"/>
</dbReference>
<dbReference type="Proteomes" id="UP001108280">
    <property type="component" value="Unplaced"/>
</dbReference>
<dbReference type="GO" id="GO:0030424">
    <property type="term" value="C:axon"/>
    <property type="evidence" value="ECO:0007669"/>
    <property type="project" value="TreeGrafter"/>
</dbReference>
<dbReference type="GO" id="GO:0016323">
    <property type="term" value="C:basolateral plasma membrane"/>
    <property type="evidence" value="ECO:0007669"/>
    <property type="project" value="UniProtKB-SubCell"/>
</dbReference>
<dbReference type="GO" id="GO:0005789">
    <property type="term" value="C:endoplasmic reticulum membrane"/>
    <property type="evidence" value="ECO:0007669"/>
    <property type="project" value="UniProtKB-SubCell"/>
</dbReference>
<dbReference type="GO" id="GO:0005886">
    <property type="term" value="C:plasma membrane"/>
    <property type="evidence" value="ECO:0000250"/>
    <property type="project" value="UniProtKB"/>
</dbReference>
<dbReference type="GO" id="GO:0098632">
    <property type="term" value="F:cell-cell adhesion mediator activity"/>
    <property type="evidence" value="ECO:0007669"/>
    <property type="project" value="TreeGrafter"/>
</dbReference>
<dbReference type="GO" id="GO:0005537">
    <property type="term" value="F:D-mannose binding"/>
    <property type="evidence" value="ECO:0007669"/>
    <property type="project" value="UniProtKB-KW"/>
</dbReference>
<dbReference type="GO" id="GO:0038023">
    <property type="term" value="F:signaling receptor activity"/>
    <property type="evidence" value="ECO:0000250"/>
    <property type="project" value="UniProtKB"/>
</dbReference>
<dbReference type="GO" id="GO:0001525">
    <property type="term" value="P:angiogenesis"/>
    <property type="evidence" value="ECO:0007669"/>
    <property type="project" value="UniProtKB-KW"/>
</dbReference>
<dbReference type="GO" id="GO:0007411">
    <property type="term" value="P:axon guidance"/>
    <property type="evidence" value="ECO:0007669"/>
    <property type="project" value="TreeGrafter"/>
</dbReference>
<dbReference type="GO" id="GO:0070593">
    <property type="term" value="P:dendrite self-avoidance"/>
    <property type="evidence" value="ECO:0007669"/>
    <property type="project" value="TreeGrafter"/>
</dbReference>
<dbReference type="GO" id="GO:0061154">
    <property type="term" value="P:endothelial tube morphogenesis"/>
    <property type="evidence" value="ECO:0000250"/>
    <property type="project" value="UniProtKB"/>
</dbReference>
<dbReference type="GO" id="GO:0007156">
    <property type="term" value="P:homophilic cell adhesion via plasma membrane adhesion molecules"/>
    <property type="evidence" value="ECO:0007669"/>
    <property type="project" value="TreeGrafter"/>
</dbReference>
<dbReference type="GO" id="GO:0010595">
    <property type="term" value="P:positive regulation of endothelial cell migration"/>
    <property type="evidence" value="ECO:0000250"/>
    <property type="project" value="UniProtKB"/>
</dbReference>
<dbReference type="GO" id="GO:0010575">
    <property type="term" value="P:positive regulation of vascular endothelial growth factor production"/>
    <property type="evidence" value="ECO:0000250"/>
    <property type="project" value="UniProtKB"/>
</dbReference>
<dbReference type="GO" id="GO:0072659">
    <property type="term" value="P:protein localization to plasma membrane"/>
    <property type="evidence" value="ECO:0000250"/>
    <property type="project" value="UniProtKB"/>
</dbReference>
<dbReference type="FunFam" id="2.60.40.10:FF:001329">
    <property type="entry name" value="Basigin"/>
    <property type="match status" value="1"/>
</dbReference>
<dbReference type="FunFam" id="2.60.40.10:FF:000387">
    <property type="entry name" value="Neuroplastin b"/>
    <property type="match status" value="1"/>
</dbReference>
<dbReference type="Gene3D" id="2.60.40.10">
    <property type="entry name" value="Immunoglobulins"/>
    <property type="match status" value="2"/>
</dbReference>
<dbReference type="InterPro" id="IPR007110">
    <property type="entry name" value="Ig-like_dom"/>
</dbReference>
<dbReference type="InterPro" id="IPR036179">
    <property type="entry name" value="Ig-like_dom_sf"/>
</dbReference>
<dbReference type="InterPro" id="IPR013783">
    <property type="entry name" value="Ig-like_fold"/>
</dbReference>
<dbReference type="InterPro" id="IPR003599">
    <property type="entry name" value="Ig_sub"/>
</dbReference>
<dbReference type="InterPro" id="IPR003598">
    <property type="entry name" value="Ig_sub2"/>
</dbReference>
<dbReference type="PANTHER" id="PTHR10075:SF107">
    <property type="entry name" value="BASIGIN"/>
    <property type="match status" value="1"/>
</dbReference>
<dbReference type="PANTHER" id="PTHR10075">
    <property type="entry name" value="BASIGIN RELATED"/>
    <property type="match status" value="1"/>
</dbReference>
<dbReference type="Pfam" id="PF13927">
    <property type="entry name" value="Ig_3"/>
    <property type="match status" value="1"/>
</dbReference>
<dbReference type="PRINTS" id="PR01856">
    <property type="entry name" value="BASIGIN"/>
</dbReference>
<dbReference type="SMART" id="SM00409">
    <property type="entry name" value="IG"/>
    <property type="match status" value="1"/>
</dbReference>
<dbReference type="SMART" id="SM00408">
    <property type="entry name" value="IGc2"/>
    <property type="match status" value="1"/>
</dbReference>
<dbReference type="SUPFAM" id="SSF48726">
    <property type="entry name" value="Immunoglobulin"/>
    <property type="match status" value="1"/>
</dbReference>
<dbReference type="PROSITE" id="PS50835">
    <property type="entry name" value="IG_LIKE"/>
    <property type="match status" value="2"/>
</dbReference>
<feature type="chain" id="PRO_0000014517" description="Basigin">
    <location>
        <begin position="1" status="less than"/>
        <end position="249"/>
    </location>
</feature>
<feature type="topological domain" description="Extracellular" evidence="2">
    <location>
        <begin position="1" status="less than"/>
        <end position="187"/>
    </location>
</feature>
<feature type="transmembrane region" description="Helical" evidence="4">
    <location>
        <begin position="188"/>
        <end position="208"/>
    </location>
</feature>
<feature type="topological domain" description="Cytoplasmic" evidence="2">
    <location>
        <begin position="209"/>
        <end position="249"/>
    </location>
</feature>
<feature type="domain" description="Ig-like C2-type">
    <location>
        <begin position="1"/>
        <end position="82"/>
    </location>
</feature>
<feature type="domain" description="Ig-like V-type">
    <location>
        <begin position="84"/>
        <end position="179"/>
    </location>
</feature>
<feature type="region of interest" description="Disordered" evidence="6">
    <location>
        <begin position="216"/>
        <end position="249"/>
    </location>
</feature>
<feature type="modified residue" description="Phosphothreonine" evidence="1">
    <location>
        <position position="218"/>
    </location>
</feature>
<feature type="modified residue" description="Phosphoserine" evidence="3">
    <location>
        <position position="232"/>
    </location>
</feature>
<feature type="glycosylation site" description="N-linked (GlcNAc...) asparagine" evidence="3">
    <location>
        <position position="23"/>
    </location>
</feature>
<feature type="glycosylation site" description="N-linked (GlcNAc...) asparagine" evidence="3">
    <location>
        <position position="132"/>
    </location>
</feature>
<feature type="glycosylation site" description="N-linked (GlcNAc...) asparagine" evidence="4">
    <location>
        <position position="166"/>
    </location>
</feature>
<feature type="disulfide bond" evidence="5">
    <location>
        <begin position="20"/>
        <end position="66"/>
    </location>
</feature>
<feature type="disulfide bond" evidence="5">
    <location>
        <begin position="105"/>
        <end position="165"/>
    </location>
</feature>
<feature type="non-terminal residue">
    <location>
        <position position="1"/>
    </location>
</feature>
<proteinExistence type="evidence at transcript level"/>
<gene>
    <name type="primary">BSG</name>
</gene>
<sequence>AAGTIQTSVNDVGSKTHLTCSLNSSGVDIIGHRWMRGGKILQEDTLPDLQTQYTVDIDDRSGDYACIFLPEPVGRSNIVVEGPPRIKVGKKSEHSSEGENVRLICKSESSHPPVTEWSWFKTSDSGDQLITNSSESKYVVISTADRSELTISNLDINSDPGTYMCNATNTQGSVQEIMTLRVRSRLAALWPFLGIVAEVLVLVTIIFIYEKRRKPDQTLDEDDPGAAPLKGSGHHMNDKDKNVRQRNAT</sequence>
<keyword id="KW-0037">Angiogenesis</keyword>
<keyword id="KW-1003">Cell membrane</keyword>
<keyword id="KW-1015">Disulfide bond</keyword>
<keyword id="KW-0256">Endoplasmic reticulum</keyword>
<keyword id="KW-0325">Glycoprotein</keyword>
<keyword id="KW-0393">Immunoglobulin domain</keyword>
<keyword id="KW-0430">Lectin</keyword>
<keyword id="KW-0465">Mannose-binding</keyword>
<keyword id="KW-0472">Membrane</keyword>
<keyword id="KW-0597">Phosphoprotein</keyword>
<keyword id="KW-0675">Receptor</keyword>
<keyword id="KW-0812">Transmembrane</keyword>
<keyword id="KW-1133">Transmembrane helix</keyword>
<comment type="function">
    <text evidence="3">Signaling receptor for cyclophilins, essential for PPIA/CYPA and PPIB/CYPB-dependent signaling related to chemotaxis and adhesion of immune cells (By similarity). Plays an important role in targeting the monocarboxylate transporters SLC16A1/GLUT1, SLC16A3, SLC16A8, SLC16A11 and SLC16A12 to the plasma membrane (By similarity). Acts as a coreceptor for vascular endothelial growth factor receptor 2 (KDR/VEGFR2) in endothelial cells enhancing its VEGFA-mediated activation and downstream signaling (By similarity). Promotes angiogenesis through EPAS1/HIF2A-mediated up-regulation of VEGFA and KDR/VEGFR2 in endothelial cells (By similarity).</text>
</comment>
<comment type="subunit">
    <text evidence="1 2 3">Homooligomer (By similarity). Interacts with VEGFA, KDR/VEGFR2, PPIA/CYPA, SLC16A12, SLC16A11, ATP1B2, MAG, L1CAM and AJAP1 (By similarity). Interacts with SLC16A3; interaction mediates SLC16A3 targeting to the plasma membrane. Interacts with SLC16A1; interaction mediates SLC16A1 targeting to the plasma membrane. Interacts with PPIL2; regulates BSG transport to the cell membrane (By similarity). Interacts with XKR8; promoting its localization at the cell membrane (By similarity). Interacts with SLC16A6; this interaction mediates targeting to the plasma membrane.</text>
</comment>
<comment type="subcellular location">
    <subcellularLocation>
        <location evidence="3">Cell membrane</location>
        <topology evidence="2">Single-pass type I membrane protein</topology>
    </subcellularLocation>
    <subcellularLocation>
        <location evidence="3">Endoplasmic reticulum membrane</location>
        <topology evidence="2">Single-pass type I membrane protein</topology>
    </subcellularLocation>
    <subcellularLocation>
        <location evidence="3">Basolateral cell membrane</location>
        <topology evidence="2">Single-pass type I membrane protein</topology>
    </subcellularLocation>
</comment>
<protein>
    <recommendedName>
        <fullName>Basigin</fullName>
    </recommendedName>
    <cdAntigenName>CD147</cdAntigenName>
</protein>
<name>BASI_CRIGR</name>
<evidence type="ECO:0000250" key="1">
    <source>
        <dbReference type="UniProtKB" id="P18572"/>
    </source>
</evidence>
<evidence type="ECO:0000250" key="2">
    <source>
        <dbReference type="UniProtKB" id="P26453"/>
    </source>
</evidence>
<evidence type="ECO:0000250" key="3">
    <source>
        <dbReference type="UniProtKB" id="P35613"/>
    </source>
</evidence>
<evidence type="ECO:0000255" key="4"/>
<evidence type="ECO:0000255" key="5">
    <source>
        <dbReference type="PROSITE-ProRule" id="PRU00114"/>
    </source>
</evidence>
<evidence type="ECO:0000256" key="6">
    <source>
        <dbReference type="SAM" id="MobiDB-lite"/>
    </source>
</evidence>
<reference key="1">
    <citation type="journal article" date="2001" name="Proc. Natl. Acad. Sci. U.S.A.">
        <title>CD147 facilitates HIV-1 infection by interacting with virus-associated cyclophilin A.</title>
        <authorList>
            <person name="Pushkarsky T."/>
            <person name="Zybarth G."/>
            <person name="Dubrovsky L."/>
            <person name="Yurchenko V."/>
            <person name="Tang H."/>
            <person name="Guo H."/>
            <person name="Toole B."/>
            <person name="Sherry B."/>
            <person name="Bukrinsky M."/>
        </authorList>
    </citation>
    <scope>NUCLEOTIDE SEQUENCE [MRNA]</scope>
    <source>
        <tissue>Ovary</tissue>
    </source>
</reference>